<comment type="function">
    <text evidence="1">Component of the eukaryotic translation initiation factor 3 (eIF-3) complex, which is involved in protein synthesis of a specialized repertoire of mRNAs and, together with other initiation factors, stimulates binding of mRNA and methionyl-tRNAi to the 40S ribosome. The eIF-3 complex specifically targets and initiates translation of a subset of mRNAs involved in cell proliferation.</text>
</comment>
<comment type="subunit">
    <text evidence="1">Component of the eukaryotic translation initiation factor 3 (eIF-3) complex. The eIF-3 complex interacts with pix.</text>
</comment>
<comment type="subcellular location">
    <subcellularLocation>
        <location evidence="1">Cytoplasm</location>
    </subcellularLocation>
</comment>
<comment type="similarity">
    <text evidence="1">Belongs to the eIF-3 subunit K family.</text>
</comment>
<evidence type="ECO:0000255" key="1">
    <source>
        <dbReference type="HAMAP-Rule" id="MF_03010"/>
    </source>
</evidence>
<evidence type="ECO:0000255" key="2">
    <source>
        <dbReference type="PROSITE-ProRule" id="PRU01185"/>
    </source>
</evidence>
<gene>
    <name type="ORF">GF13261</name>
</gene>
<keyword id="KW-0963">Cytoplasm</keyword>
<keyword id="KW-0396">Initiation factor</keyword>
<keyword id="KW-0648">Protein biosynthesis</keyword>
<keyword id="KW-1185">Reference proteome</keyword>
<proteinExistence type="inferred from homology"/>
<protein>
    <recommendedName>
        <fullName evidence="1">Eukaryotic translation initiation factor 3 subunit K</fullName>
        <shortName evidence="1">eIF3k</shortName>
    </recommendedName>
    <alternativeName>
        <fullName evidence="1">eIF-3 p25</fullName>
    </alternativeName>
</protein>
<name>EIF3K_DROAN</name>
<feature type="chain" id="PRO_0000365040" description="Eukaryotic translation initiation factor 3 subunit K">
    <location>
        <begin position="1"/>
        <end position="222"/>
    </location>
</feature>
<feature type="domain" description="PCI" evidence="2">
    <location>
        <begin position="46"/>
        <end position="208"/>
    </location>
</feature>
<dbReference type="EMBL" id="CH902619">
    <property type="protein sequence ID" value="EDV37053.1"/>
    <property type="molecule type" value="Genomic_DNA"/>
</dbReference>
<dbReference type="SMR" id="B3MIY7"/>
<dbReference type="FunCoup" id="B3MIY7">
    <property type="interactions" value="1919"/>
</dbReference>
<dbReference type="STRING" id="7217.B3MIY7"/>
<dbReference type="EnsemblMetazoa" id="FBtr0117961">
    <property type="protein sequence ID" value="FBpp0116453"/>
    <property type="gene ID" value="FBgn0090293"/>
</dbReference>
<dbReference type="EnsemblMetazoa" id="XM_001960195.4">
    <property type="protein sequence ID" value="XP_001960231.1"/>
    <property type="gene ID" value="LOC6496103"/>
</dbReference>
<dbReference type="GeneID" id="6496103"/>
<dbReference type="KEGG" id="dan:6496103"/>
<dbReference type="CTD" id="27335"/>
<dbReference type="eggNOG" id="KOG3252">
    <property type="taxonomic scope" value="Eukaryota"/>
</dbReference>
<dbReference type="HOGENOM" id="CLU_076723_1_0_1"/>
<dbReference type="InParanoid" id="B3MIY7"/>
<dbReference type="OMA" id="WKHQGQG"/>
<dbReference type="OrthoDB" id="337745at2759"/>
<dbReference type="PhylomeDB" id="B3MIY7"/>
<dbReference type="Proteomes" id="UP000007801">
    <property type="component" value="Unassembled WGS sequence"/>
</dbReference>
<dbReference type="GO" id="GO:0016282">
    <property type="term" value="C:eukaryotic 43S preinitiation complex"/>
    <property type="evidence" value="ECO:0007669"/>
    <property type="project" value="UniProtKB-UniRule"/>
</dbReference>
<dbReference type="GO" id="GO:0033290">
    <property type="term" value="C:eukaryotic 48S preinitiation complex"/>
    <property type="evidence" value="ECO:0007669"/>
    <property type="project" value="UniProtKB-UniRule"/>
</dbReference>
<dbReference type="GO" id="GO:0005852">
    <property type="term" value="C:eukaryotic translation initiation factor 3 complex"/>
    <property type="evidence" value="ECO:0007669"/>
    <property type="project" value="UniProtKB-UniRule"/>
</dbReference>
<dbReference type="GO" id="GO:0043022">
    <property type="term" value="F:ribosome binding"/>
    <property type="evidence" value="ECO:0007669"/>
    <property type="project" value="InterPro"/>
</dbReference>
<dbReference type="GO" id="GO:0003723">
    <property type="term" value="F:RNA binding"/>
    <property type="evidence" value="ECO:0007669"/>
    <property type="project" value="UniProtKB-UniRule"/>
</dbReference>
<dbReference type="GO" id="GO:0003743">
    <property type="term" value="F:translation initiation factor activity"/>
    <property type="evidence" value="ECO:0007669"/>
    <property type="project" value="UniProtKB-UniRule"/>
</dbReference>
<dbReference type="GO" id="GO:0001732">
    <property type="term" value="P:formation of cytoplasmic translation initiation complex"/>
    <property type="evidence" value="ECO:0007669"/>
    <property type="project" value="UniProtKB-UniRule"/>
</dbReference>
<dbReference type="GO" id="GO:0006446">
    <property type="term" value="P:regulation of translational initiation"/>
    <property type="evidence" value="ECO:0007669"/>
    <property type="project" value="InterPro"/>
</dbReference>
<dbReference type="FunFam" id="1.10.10.10:FF:000212">
    <property type="entry name" value="Eukaryotic translation initiation factor 3 subunit K"/>
    <property type="match status" value="1"/>
</dbReference>
<dbReference type="FunFam" id="1.25.40.250:FF:000001">
    <property type="entry name" value="Eukaryotic translation initiation factor 3 subunit K"/>
    <property type="match status" value="1"/>
</dbReference>
<dbReference type="Gene3D" id="1.25.40.250">
    <property type="entry name" value="ARM repeat, domain 1"/>
    <property type="match status" value="1"/>
</dbReference>
<dbReference type="Gene3D" id="1.10.10.10">
    <property type="entry name" value="Winged helix-like DNA-binding domain superfamily/Winged helix DNA-binding domain"/>
    <property type="match status" value="1"/>
</dbReference>
<dbReference type="HAMAP" id="MF_03010">
    <property type="entry name" value="eIF3k"/>
    <property type="match status" value="1"/>
</dbReference>
<dbReference type="InterPro" id="IPR016024">
    <property type="entry name" value="ARM-type_fold"/>
</dbReference>
<dbReference type="InterPro" id="IPR033464">
    <property type="entry name" value="CSN8_PSD8_EIF3K"/>
</dbReference>
<dbReference type="InterPro" id="IPR009374">
    <property type="entry name" value="eIF3k"/>
</dbReference>
<dbReference type="InterPro" id="IPR000717">
    <property type="entry name" value="PCI_dom"/>
</dbReference>
<dbReference type="InterPro" id="IPR016020">
    <property type="entry name" value="Transl_init_fac_sub12_N_euk"/>
</dbReference>
<dbReference type="InterPro" id="IPR036388">
    <property type="entry name" value="WH-like_DNA-bd_sf"/>
</dbReference>
<dbReference type="InterPro" id="IPR036390">
    <property type="entry name" value="WH_DNA-bd_sf"/>
</dbReference>
<dbReference type="PANTHER" id="PTHR13022">
    <property type="entry name" value="EUKARYOTIC TRANSLATION INITIATION FACTOR 3 SUBUNIT 11"/>
    <property type="match status" value="1"/>
</dbReference>
<dbReference type="PANTHER" id="PTHR13022:SF0">
    <property type="entry name" value="EUKARYOTIC TRANSLATION INITIATION FACTOR 3 SUBUNIT K"/>
    <property type="match status" value="1"/>
</dbReference>
<dbReference type="Pfam" id="PF10075">
    <property type="entry name" value="CSN8_PSD8_EIF3K"/>
    <property type="match status" value="1"/>
</dbReference>
<dbReference type="SUPFAM" id="SSF48371">
    <property type="entry name" value="ARM repeat"/>
    <property type="match status" value="1"/>
</dbReference>
<dbReference type="SUPFAM" id="SSF46785">
    <property type="entry name" value="Winged helix' DNA-binding domain"/>
    <property type="match status" value="1"/>
</dbReference>
<dbReference type="PROSITE" id="PS50250">
    <property type="entry name" value="PCI"/>
    <property type="match status" value="1"/>
</dbReference>
<reference key="1">
    <citation type="journal article" date="2007" name="Nature">
        <title>Evolution of genes and genomes on the Drosophila phylogeny.</title>
        <authorList>
            <consortium name="Drosophila 12 genomes consortium"/>
        </authorList>
    </citation>
    <scope>NUCLEOTIDE SEQUENCE [LARGE SCALE GENOMIC DNA]</scope>
    <source>
        <strain>Tucson 14024-0371.13</strain>
    </source>
</reference>
<accession>B3MIY7</accession>
<sequence length="222" mass="25686">MSHLVKMENGQSQTIQEMLGCIERYNPDHLKTLEAYVQDQAKNNTYDLEANLAVLKLYQFNPHMLNFDITYTILLKCLTNLPHTDFVMAKCLLLPQQMKDENVQTIIDLADILERADFTLFWQRAEVNRNMFRHITGFHDSIRKFVSHVIGTTFQTIRKDLLKELLGGIEDSTLESWVKRNGWKHQGQGLVVVATQDDKIKTKNITEKIEFENVGALMAQCL</sequence>
<organism>
    <name type="scientific">Drosophila ananassae</name>
    <name type="common">Fruit fly</name>
    <dbReference type="NCBI Taxonomy" id="7217"/>
    <lineage>
        <taxon>Eukaryota</taxon>
        <taxon>Metazoa</taxon>
        <taxon>Ecdysozoa</taxon>
        <taxon>Arthropoda</taxon>
        <taxon>Hexapoda</taxon>
        <taxon>Insecta</taxon>
        <taxon>Pterygota</taxon>
        <taxon>Neoptera</taxon>
        <taxon>Endopterygota</taxon>
        <taxon>Diptera</taxon>
        <taxon>Brachycera</taxon>
        <taxon>Muscomorpha</taxon>
        <taxon>Ephydroidea</taxon>
        <taxon>Drosophilidae</taxon>
        <taxon>Drosophila</taxon>
        <taxon>Sophophora</taxon>
    </lineage>
</organism>